<reference key="1">
    <citation type="journal article" date="2006" name="J. Bacteriol.">
        <title>Pathogenomic sequence analysis of Bacillus cereus and Bacillus thuringiensis isolates closely related to Bacillus anthracis.</title>
        <authorList>
            <person name="Han C.S."/>
            <person name="Xie G."/>
            <person name="Challacombe J.F."/>
            <person name="Altherr M.R."/>
            <person name="Bhotika S.S."/>
            <person name="Bruce D."/>
            <person name="Campbell C.S."/>
            <person name="Campbell M.L."/>
            <person name="Chen J."/>
            <person name="Chertkov O."/>
            <person name="Cleland C."/>
            <person name="Dimitrijevic M."/>
            <person name="Doggett N.A."/>
            <person name="Fawcett J.J."/>
            <person name="Glavina T."/>
            <person name="Goodwin L.A."/>
            <person name="Hill K.K."/>
            <person name="Hitchcock P."/>
            <person name="Jackson P.J."/>
            <person name="Keim P."/>
            <person name="Kewalramani A.R."/>
            <person name="Longmire J."/>
            <person name="Lucas S."/>
            <person name="Malfatti S."/>
            <person name="McMurry K."/>
            <person name="Meincke L.J."/>
            <person name="Misra M."/>
            <person name="Moseman B.L."/>
            <person name="Mundt M."/>
            <person name="Munk A.C."/>
            <person name="Okinaka R.T."/>
            <person name="Parson-Quintana B."/>
            <person name="Reilly L.P."/>
            <person name="Richardson P."/>
            <person name="Robinson D.L."/>
            <person name="Rubin E."/>
            <person name="Saunders E."/>
            <person name="Tapia R."/>
            <person name="Tesmer J.G."/>
            <person name="Thayer N."/>
            <person name="Thompson L.S."/>
            <person name="Tice H."/>
            <person name="Ticknor L.O."/>
            <person name="Wills P.L."/>
            <person name="Brettin T.S."/>
            <person name="Gilna P."/>
        </authorList>
    </citation>
    <scope>NUCLEOTIDE SEQUENCE [LARGE SCALE GENOMIC DNA]</scope>
    <source>
        <strain>97-27</strain>
    </source>
</reference>
<protein>
    <recommendedName>
        <fullName evidence="1">Transcription factor FapR</fullName>
    </recommendedName>
    <alternativeName>
        <fullName evidence="1">Fatty acid and phospholipid biosynthesis regulator</fullName>
    </alternativeName>
</protein>
<sequence length="197" mass="22782">MKKRRSKKERQELLQQTIETNPFITDEDLAEKFQVSIQTVRLDRMELSIPELRERIKHVATKQHEEDVKSLPLEEVVGEIIDIELDRHAISIFEVKVEHVFKRNQIARGHHLFAQANSLAVAVIDEELALTAKSTIRYIRPVKLGERVVAKARVEDVENDKGRTVVKVRSFVGEELVFTGTFEMYRSSNYSEEGNNL</sequence>
<accession>Q6HEW1</accession>
<dbReference type="EMBL" id="AE017355">
    <property type="protein sequence ID" value="AAT60620.1"/>
    <property type="status" value="ALT_INIT"/>
    <property type="molecule type" value="Genomic_DNA"/>
</dbReference>
<dbReference type="RefSeq" id="WP_000747352.1">
    <property type="nucleotide sequence ID" value="NC_005957.1"/>
</dbReference>
<dbReference type="RefSeq" id="YP_037915.1">
    <property type="nucleotide sequence ID" value="NC_005957.1"/>
</dbReference>
<dbReference type="SMR" id="Q6HEW1"/>
<dbReference type="GeneID" id="93007258"/>
<dbReference type="KEGG" id="btk:BT9727_3595"/>
<dbReference type="PATRIC" id="fig|281309.8.peg.3833"/>
<dbReference type="HOGENOM" id="CLU_095708_0_0_9"/>
<dbReference type="Proteomes" id="UP000001301">
    <property type="component" value="Chromosome"/>
</dbReference>
<dbReference type="GO" id="GO:0003677">
    <property type="term" value="F:DNA binding"/>
    <property type="evidence" value="ECO:0007669"/>
    <property type="project" value="UniProtKB-KW"/>
</dbReference>
<dbReference type="GO" id="GO:0003700">
    <property type="term" value="F:DNA-binding transcription factor activity"/>
    <property type="evidence" value="ECO:0007669"/>
    <property type="project" value="UniProtKB-UniRule"/>
</dbReference>
<dbReference type="GO" id="GO:0006633">
    <property type="term" value="P:fatty acid biosynthetic process"/>
    <property type="evidence" value="ECO:0007669"/>
    <property type="project" value="UniProtKB-KW"/>
</dbReference>
<dbReference type="GO" id="GO:0045892">
    <property type="term" value="P:negative regulation of DNA-templated transcription"/>
    <property type="evidence" value="ECO:0007669"/>
    <property type="project" value="UniProtKB-UniRule"/>
</dbReference>
<dbReference type="GO" id="GO:0045717">
    <property type="term" value="P:negative regulation of fatty acid biosynthetic process"/>
    <property type="evidence" value="ECO:0007669"/>
    <property type="project" value="UniProtKB-UniRule"/>
</dbReference>
<dbReference type="CDD" id="cd03440">
    <property type="entry name" value="hot_dog"/>
    <property type="match status" value="1"/>
</dbReference>
<dbReference type="Gene3D" id="3.10.129.10">
    <property type="entry name" value="Hotdog Thioesterase"/>
    <property type="match status" value="1"/>
</dbReference>
<dbReference type="Gene3D" id="1.10.10.10">
    <property type="entry name" value="Winged helix-like DNA-binding domain superfamily/Winged helix DNA-binding domain"/>
    <property type="match status" value="1"/>
</dbReference>
<dbReference type="HAMAP" id="MF_01814">
    <property type="entry name" value="Transcrip_fact_FapR"/>
    <property type="match status" value="1"/>
</dbReference>
<dbReference type="InterPro" id="IPR029069">
    <property type="entry name" value="HotDog_dom_sf"/>
</dbReference>
<dbReference type="InterPro" id="IPR006683">
    <property type="entry name" value="Thioestr_dom"/>
</dbReference>
<dbReference type="InterPro" id="IPR017275">
    <property type="entry name" value="Transcription_factor_FapR"/>
</dbReference>
<dbReference type="InterPro" id="IPR036388">
    <property type="entry name" value="WH-like_DNA-bd_sf"/>
</dbReference>
<dbReference type="InterPro" id="IPR036390">
    <property type="entry name" value="WH_DNA-bd_sf"/>
</dbReference>
<dbReference type="NCBIfam" id="NF003359">
    <property type="entry name" value="PRK04424.1"/>
    <property type="match status" value="1"/>
</dbReference>
<dbReference type="Pfam" id="PF03061">
    <property type="entry name" value="4HBT"/>
    <property type="match status" value="1"/>
</dbReference>
<dbReference type="PIRSF" id="PIRSF037733">
    <property type="entry name" value="Transcription_factor_FapR"/>
    <property type="match status" value="1"/>
</dbReference>
<dbReference type="SUPFAM" id="SSF54637">
    <property type="entry name" value="Thioesterase/thiol ester dehydrase-isomerase"/>
    <property type="match status" value="1"/>
</dbReference>
<dbReference type="SUPFAM" id="SSF46785">
    <property type="entry name" value="Winged helix' DNA-binding domain"/>
    <property type="match status" value="1"/>
</dbReference>
<comment type="function">
    <text evidence="1">Transcriptional factor involved in regulation of membrane lipid biosynthesis by repressing genes involved in fatty acid and phospholipid metabolism.</text>
</comment>
<comment type="similarity">
    <text evidence="1">Belongs to the FapR family.</text>
</comment>
<comment type="sequence caution" evidence="2">
    <conflict type="erroneous initiation">
        <sequence resource="EMBL-CDS" id="AAT60620"/>
    </conflict>
</comment>
<feature type="chain" id="PRO_0000172820" description="Transcription factor FapR">
    <location>
        <begin position="1"/>
        <end position="197"/>
    </location>
</feature>
<proteinExistence type="inferred from homology"/>
<evidence type="ECO:0000255" key="1">
    <source>
        <dbReference type="HAMAP-Rule" id="MF_01814"/>
    </source>
</evidence>
<evidence type="ECO:0000305" key="2"/>
<keyword id="KW-0238">DNA-binding</keyword>
<keyword id="KW-0275">Fatty acid biosynthesis</keyword>
<keyword id="KW-0276">Fatty acid metabolism</keyword>
<keyword id="KW-0444">Lipid biosynthesis</keyword>
<keyword id="KW-0443">Lipid metabolism</keyword>
<keyword id="KW-0678">Repressor</keyword>
<keyword id="KW-0804">Transcription</keyword>
<keyword id="KW-0805">Transcription regulation</keyword>
<name>FAPR_BACHK</name>
<gene>
    <name evidence="1" type="primary">fapR</name>
    <name type="ordered locus">BT9727_3595</name>
</gene>
<organism>
    <name type="scientific">Bacillus thuringiensis subsp. konkukian (strain 97-27)</name>
    <dbReference type="NCBI Taxonomy" id="281309"/>
    <lineage>
        <taxon>Bacteria</taxon>
        <taxon>Bacillati</taxon>
        <taxon>Bacillota</taxon>
        <taxon>Bacilli</taxon>
        <taxon>Bacillales</taxon>
        <taxon>Bacillaceae</taxon>
        <taxon>Bacillus</taxon>
        <taxon>Bacillus cereus group</taxon>
    </lineage>
</organism>